<keyword id="KW-0963">Cytoplasm</keyword>
<keyword id="KW-0324">Glycolysis</keyword>
<keyword id="KW-0456">Lyase</keyword>
<keyword id="KW-0460">Magnesium</keyword>
<keyword id="KW-0479">Metal-binding</keyword>
<keyword id="KW-0964">Secreted</keyword>
<reference key="1">
    <citation type="submission" date="2002-07" db="EMBL/GenBank/DDBJ databases">
        <title>Heme binding protein HupA of Bacteroides fragilis BE1.</title>
        <authorList>
            <person name="Sijbrandi R."/>
            <person name="Oudega B."/>
            <person name="Otto B.R."/>
        </authorList>
    </citation>
    <scope>NUCLEOTIDE SEQUENCE [GENOMIC DNA]</scope>
    <source>
        <strain>BE1</strain>
    </source>
</reference>
<reference key="2">
    <citation type="journal article" date="2004" name="Proc. Natl. Acad. Sci. U.S.A.">
        <title>Genomic analysis of Bacteroides fragilis reveals extensive DNA inversions regulating cell surface adaptation.</title>
        <authorList>
            <person name="Kuwahara T."/>
            <person name="Yamashita A."/>
            <person name="Hirakawa H."/>
            <person name="Nakayama H."/>
            <person name="Toh H."/>
            <person name="Okada N."/>
            <person name="Kuhara S."/>
            <person name="Hattori M."/>
            <person name="Hayashi T."/>
            <person name="Ohnishi Y."/>
        </authorList>
    </citation>
    <scope>NUCLEOTIDE SEQUENCE [LARGE SCALE GENOMIC DNA]</scope>
    <source>
        <strain>YCH46</strain>
    </source>
</reference>
<name>ENO_BACFR</name>
<evidence type="ECO:0000255" key="1">
    <source>
        <dbReference type="HAMAP-Rule" id="MF_00318"/>
    </source>
</evidence>
<dbReference type="EC" id="4.2.1.11" evidence="1"/>
<dbReference type="EMBL" id="AJ495857">
    <property type="protein sequence ID" value="CAD42362.1"/>
    <property type="molecule type" value="Genomic_DNA"/>
</dbReference>
<dbReference type="EMBL" id="AP006841">
    <property type="protein sequence ID" value="BAD47938.1"/>
    <property type="molecule type" value="Genomic_DNA"/>
</dbReference>
<dbReference type="RefSeq" id="WP_005785741.1">
    <property type="nucleotide sequence ID" value="NZ_UYXF01000021.1"/>
</dbReference>
<dbReference type="RefSeq" id="YP_098472.1">
    <property type="nucleotide sequence ID" value="NC_006347.1"/>
</dbReference>
<dbReference type="SMR" id="Q8KNX9"/>
<dbReference type="STRING" id="295405.BF1188"/>
<dbReference type="GeneID" id="60366948"/>
<dbReference type="KEGG" id="bfr:BF1188"/>
<dbReference type="PATRIC" id="fig|295405.11.peg.1175"/>
<dbReference type="HOGENOM" id="CLU_031223_2_1_10"/>
<dbReference type="OrthoDB" id="9804716at2"/>
<dbReference type="BRENDA" id="4.2.1.11">
    <property type="organism ID" value="755"/>
</dbReference>
<dbReference type="UniPathway" id="UPA00109">
    <property type="reaction ID" value="UER00187"/>
</dbReference>
<dbReference type="Proteomes" id="UP000002197">
    <property type="component" value="Chromosome"/>
</dbReference>
<dbReference type="GO" id="GO:0009986">
    <property type="term" value="C:cell surface"/>
    <property type="evidence" value="ECO:0007669"/>
    <property type="project" value="UniProtKB-SubCell"/>
</dbReference>
<dbReference type="GO" id="GO:0005576">
    <property type="term" value="C:extracellular region"/>
    <property type="evidence" value="ECO:0007669"/>
    <property type="project" value="UniProtKB-SubCell"/>
</dbReference>
<dbReference type="GO" id="GO:0000015">
    <property type="term" value="C:phosphopyruvate hydratase complex"/>
    <property type="evidence" value="ECO:0007669"/>
    <property type="project" value="InterPro"/>
</dbReference>
<dbReference type="GO" id="GO:0000287">
    <property type="term" value="F:magnesium ion binding"/>
    <property type="evidence" value="ECO:0007669"/>
    <property type="project" value="UniProtKB-UniRule"/>
</dbReference>
<dbReference type="GO" id="GO:0004634">
    <property type="term" value="F:phosphopyruvate hydratase activity"/>
    <property type="evidence" value="ECO:0007669"/>
    <property type="project" value="UniProtKB-UniRule"/>
</dbReference>
<dbReference type="GO" id="GO:0006096">
    <property type="term" value="P:glycolytic process"/>
    <property type="evidence" value="ECO:0007669"/>
    <property type="project" value="UniProtKB-UniRule"/>
</dbReference>
<dbReference type="CDD" id="cd03313">
    <property type="entry name" value="enolase"/>
    <property type="match status" value="1"/>
</dbReference>
<dbReference type="FunFam" id="3.20.20.120:FF:000001">
    <property type="entry name" value="Enolase"/>
    <property type="match status" value="1"/>
</dbReference>
<dbReference type="FunFam" id="3.30.390.10:FF:000001">
    <property type="entry name" value="Enolase"/>
    <property type="match status" value="1"/>
</dbReference>
<dbReference type="Gene3D" id="3.20.20.120">
    <property type="entry name" value="Enolase-like C-terminal domain"/>
    <property type="match status" value="1"/>
</dbReference>
<dbReference type="Gene3D" id="3.30.390.10">
    <property type="entry name" value="Enolase-like, N-terminal domain"/>
    <property type="match status" value="1"/>
</dbReference>
<dbReference type="HAMAP" id="MF_00318">
    <property type="entry name" value="Enolase"/>
    <property type="match status" value="1"/>
</dbReference>
<dbReference type="InterPro" id="IPR000941">
    <property type="entry name" value="Enolase"/>
</dbReference>
<dbReference type="InterPro" id="IPR036849">
    <property type="entry name" value="Enolase-like_C_sf"/>
</dbReference>
<dbReference type="InterPro" id="IPR029017">
    <property type="entry name" value="Enolase-like_N"/>
</dbReference>
<dbReference type="InterPro" id="IPR020810">
    <property type="entry name" value="Enolase_C"/>
</dbReference>
<dbReference type="InterPro" id="IPR020809">
    <property type="entry name" value="Enolase_CS"/>
</dbReference>
<dbReference type="InterPro" id="IPR020811">
    <property type="entry name" value="Enolase_N"/>
</dbReference>
<dbReference type="NCBIfam" id="TIGR01060">
    <property type="entry name" value="eno"/>
    <property type="match status" value="1"/>
</dbReference>
<dbReference type="PANTHER" id="PTHR11902">
    <property type="entry name" value="ENOLASE"/>
    <property type="match status" value="1"/>
</dbReference>
<dbReference type="PANTHER" id="PTHR11902:SF1">
    <property type="entry name" value="ENOLASE"/>
    <property type="match status" value="1"/>
</dbReference>
<dbReference type="Pfam" id="PF00113">
    <property type="entry name" value="Enolase_C"/>
    <property type="match status" value="1"/>
</dbReference>
<dbReference type="Pfam" id="PF03952">
    <property type="entry name" value="Enolase_N"/>
    <property type="match status" value="1"/>
</dbReference>
<dbReference type="PIRSF" id="PIRSF001400">
    <property type="entry name" value="Enolase"/>
    <property type="match status" value="1"/>
</dbReference>
<dbReference type="PRINTS" id="PR00148">
    <property type="entry name" value="ENOLASE"/>
</dbReference>
<dbReference type="SFLD" id="SFLDF00002">
    <property type="entry name" value="enolase"/>
    <property type="match status" value="1"/>
</dbReference>
<dbReference type="SFLD" id="SFLDG00178">
    <property type="entry name" value="enolase"/>
    <property type="match status" value="1"/>
</dbReference>
<dbReference type="SMART" id="SM01192">
    <property type="entry name" value="Enolase_C"/>
    <property type="match status" value="1"/>
</dbReference>
<dbReference type="SMART" id="SM01193">
    <property type="entry name" value="Enolase_N"/>
    <property type="match status" value="1"/>
</dbReference>
<dbReference type="SUPFAM" id="SSF51604">
    <property type="entry name" value="Enolase C-terminal domain-like"/>
    <property type="match status" value="1"/>
</dbReference>
<dbReference type="SUPFAM" id="SSF54826">
    <property type="entry name" value="Enolase N-terminal domain-like"/>
    <property type="match status" value="1"/>
</dbReference>
<dbReference type="PROSITE" id="PS00164">
    <property type="entry name" value="ENOLASE"/>
    <property type="match status" value="1"/>
</dbReference>
<comment type="function">
    <text evidence="1">Catalyzes the reversible conversion of 2-phosphoglycerate (2-PG) into phosphoenolpyruvate (PEP). It is essential for the degradation of carbohydrates via glycolysis.</text>
</comment>
<comment type="catalytic activity">
    <reaction evidence="1">
        <text>(2R)-2-phosphoglycerate = phosphoenolpyruvate + H2O</text>
        <dbReference type="Rhea" id="RHEA:10164"/>
        <dbReference type="ChEBI" id="CHEBI:15377"/>
        <dbReference type="ChEBI" id="CHEBI:58289"/>
        <dbReference type="ChEBI" id="CHEBI:58702"/>
        <dbReference type="EC" id="4.2.1.11"/>
    </reaction>
</comment>
<comment type="cofactor">
    <cofactor evidence="1">
        <name>Mg(2+)</name>
        <dbReference type="ChEBI" id="CHEBI:18420"/>
    </cofactor>
    <text evidence="1">Binds a second Mg(2+) ion via substrate during catalysis.</text>
</comment>
<comment type="pathway">
    <text evidence="1">Carbohydrate degradation; glycolysis; pyruvate from D-glyceraldehyde 3-phosphate: step 4/5.</text>
</comment>
<comment type="subcellular location">
    <subcellularLocation>
        <location evidence="1">Cytoplasm</location>
    </subcellularLocation>
    <subcellularLocation>
        <location evidence="1">Secreted</location>
    </subcellularLocation>
    <subcellularLocation>
        <location evidence="1">Cell surface</location>
    </subcellularLocation>
    <text evidence="1">Fractions of enolase are present in both the cytoplasm and on the cell surface.</text>
</comment>
<comment type="similarity">
    <text evidence="1">Belongs to the enolase family.</text>
</comment>
<organism>
    <name type="scientific">Bacteroides fragilis (strain YCH46)</name>
    <dbReference type="NCBI Taxonomy" id="295405"/>
    <lineage>
        <taxon>Bacteria</taxon>
        <taxon>Pseudomonadati</taxon>
        <taxon>Bacteroidota</taxon>
        <taxon>Bacteroidia</taxon>
        <taxon>Bacteroidales</taxon>
        <taxon>Bacteroidaceae</taxon>
        <taxon>Bacteroides</taxon>
    </lineage>
</organism>
<protein>
    <recommendedName>
        <fullName evidence="1">Enolase</fullName>
        <ecNumber evidence="1">4.2.1.11</ecNumber>
    </recommendedName>
    <alternativeName>
        <fullName evidence="1">2-phospho-D-glycerate hydro-lyase</fullName>
    </alternativeName>
    <alternativeName>
        <fullName evidence="1">2-phosphoglycerate dehydratase</fullName>
    </alternativeName>
</protein>
<sequence length="429" mass="46404">MKIEKITGREILDSRGNPTVEVDVVLESGIMGRASVPSGASTGEHEALELRDGDKHRYGGKGVQKAVENVNKVIAPHLIGMSALDQIGIDHAMLALDGTKTKAKLGANAILGVSLAVAKAAANYLDIPLYRYIGGTNTYVLPVPMMNIINGGSHSDAPIAFQEFMIRPVGASSFKEGLRMGAEVFHALKKVLKDRGLSTAVGDEGGFAPNLEGTEDALNSILAAIKAAGYEPGKDVMIGMDCASSEFYHDGIYDYTKFEGEKGKKRTADEQIDYLEKLINEYPIDSIEDGMSENDWEGWKKLTQRIGDRCQLVGDDLFVTNVDFLAKGIEKGCANSILIKVNQIGSLTETLNAIEMAHRHGYTTVTSHRSGETEDATIADIAVATNSGQIKTGSLSRSDRMAKYNQLLRIEEELGDRAVYGYKRIVVKG</sequence>
<accession>Q8KNX9</accession>
<proteinExistence type="inferred from homology"/>
<gene>
    <name evidence="1" type="primary">eno</name>
    <name type="synonym">hupA</name>
    <name type="ordered locus">BF1188</name>
</gene>
<feature type="chain" id="PRO_0000133837" description="Enolase">
    <location>
        <begin position="1"/>
        <end position="429"/>
    </location>
</feature>
<feature type="active site" description="Proton donor" evidence="1">
    <location>
        <position position="204"/>
    </location>
</feature>
<feature type="active site" description="Proton acceptor" evidence="1">
    <location>
        <position position="340"/>
    </location>
</feature>
<feature type="binding site" evidence="1">
    <location>
        <position position="162"/>
    </location>
    <ligand>
        <name>(2R)-2-phosphoglycerate</name>
        <dbReference type="ChEBI" id="CHEBI:58289"/>
    </ligand>
</feature>
<feature type="binding site" evidence="1">
    <location>
        <position position="241"/>
    </location>
    <ligand>
        <name>Mg(2+)</name>
        <dbReference type="ChEBI" id="CHEBI:18420"/>
    </ligand>
</feature>
<feature type="binding site" evidence="1">
    <location>
        <position position="288"/>
    </location>
    <ligand>
        <name>Mg(2+)</name>
        <dbReference type="ChEBI" id="CHEBI:18420"/>
    </ligand>
</feature>
<feature type="binding site" evidence="1">
    <location>
        <position position="315"/>
    </location>
    <ligand>
        <name>Mg(2+)</name>
        <dbReference type="ChEBI" id="CHEBI:18420"/>
    </ligand>
</feature>
<feature type="binding site" evidence="1">
    <location>
        <position position="340"/>
    </location>
    <ligand>
        <name>(2R)-2-phosphoglycerate</name>
        <dbReference type="ChEBI" id="CHEBI:58289"/>
    </ligand>
</feature>
<feature type="binding site" evidence="1">
    <location>
        <position position="369"/>
    </location>
    <ligand>
        <name>(2R)-2-phosphoglycerate</name>
        <dbReference type="ChEBI" id="CHEBI:58289"/>
    </ligand>
</feature>
<feature type="binding site" evidence="1">
    <location>
        <position position="370"/>
    </location>
    <ligand>
        <name>(2R)-2-phosphoglycerate</name>
        <dbReference type="ChEBI" id="CHEBI:58289"/>
    </ligand>
</feature>
<feature type="binding site" evidence="1">
    <location>
        <position position="391"/>
    </location>
    <ligand>
        <name>(2R)-2-phosphoglycerate</name>
        <dbReference type="ChEBI" id="CHEBI:58289"/>
    </ligand>
</feature>